<feature type="chain" id="PRO_0000442706" description="Riboflavin transporter RibJ">
    <location>
        <begin position="1"/>
        <end position="547"/>
    </location>
</feature>
<feature type="topological domain" description="Cytoplasmic" evidence="6">
    <location>
        <begin position="1"/>
        <end position="11"/>
    </location>
</feature>
<feature type="transmembrane region" description="Helical" evidence="1">
    <location>
        <begin position="12"/>
        <end position="32"/>
    </location>
</feature>
<feature type="topological domain" description="Extracellular" evidence="6">
    <location>
        <begin position="33"/>
        <end position="58"/>
    </location>
</feature>
<feature type="transmembrane region" description="Helical" evidence="1">
    <location>
        <begin position="59"/>
        <end position="79"/>
    </location>
</feature>
<feature type="topological domain" description="Cytoplasmic" evidence="6">
    <location>
        <begin position="80"/>
        <end position="85"/>
    </location>
</feature>
<feature type="transmembrane region" description="Helical" evidence="1">
    <location>
        <begin position="86"/>
        <end position="106"/>
    </location>
</feature>
<feature type="topological domain" description="Extracellular" evidence="6">
    <location>
        <begin position="107"/>
        <end position="108"/>
    </location>
</feature>
<feature type="transmembrane region" description="Helical" evidence="1">
    <location>
        <begin position="109"/>
        <end position="129"/>
    </location>
</feature>
<feature type="topological domain" description="Cytoplasmic" evidence="6">
    <location>
        <begin position="130"/>
        <end position="144"/>
    </location>
</feature>
<feature type="transmembrane region" description="Helical" evidence="1">
    <location>
        <begin position="145"/>
        <end position="165"/>
    </location>
</feature>
<feature type="topological domain" description="Extracellular" evidence="6">
    <location>
        <begin position="166"/>
        <end position="175"/>
    </location>
</feature>
<feature type="transmembrane region" description="Helical" evidence="1">
    <location>
        <begin position="176"/>
        <end position="196"/>
    </location>
</feature>
<feature type="topological domain" description="Cytoplasmic" evidence="6">
    <location>
        <begin position="197"/>
        <end position="344"/>
    </location>
</feature>
<feature type="transmembrane region" description="Helical" evidence="1">
    <location>
        <begin position="345"/>
        <end position="365"/>
    </location>
</feature>
<feature type="topological domain" description="Extracellular" evidence="6">
    <location>
        <begin position="366"/>
        <end position="386"/>
    </location>
</feature>
<feature type="transmembrane region" description="Helical" evidence="1">
    <location>
        <begin position="387"/>
        <end position="407"/>
    </location>
</feature>
<feature type="topological domain" description="Cytoplasmic" evidence="6">
    <location>
        <begin position="408"/>
        <end position="412"/>
    </location>
</feature>
<feature type="transmembrane region" description="Helical" evidence="1">
    <location>
        <begin position="413"/>
        <end position="433"/>
    </location>
</feature>
<feature type="topological domain" description="Extracellular" evidence="6">
    <location>
        <begin position="434"/>
        <end position="437"/>
    </location>
</feature>
<feature type="transmembrane region" description="Helical" evidence="1">
    <location>
        <begin position="438"/>
        <end position="458"/>
    </location>
</feature>
<feature type="topological domain" description="Cytoplasmic" evidence="6">
    <location>
        <begin position="459"/>
        <end position="470"/>
    </location>
</feature>
<feature type="transmembrane region" description="Helical" evidence="1">
    <location>
        <begin position="471"/>
        <end position="491"/>
    </location>
</feature>
<feature type="topological domain" description="Extracellular" evidence="6">
    <location>
        <begin position="492"/>
        <end position="505"/>
    </location>
</feature>
<feature type="transmembrane region" description="Helical" evidence="1">
    <location>
        <begin position="506"/>
        <end position="526"/>
    </location>
</feature>
<feature type="topological domain" description="Cytoplasmic" evidence="6">
    <location>
        <begin position="527"/>
        <end position="547"/>
    </location>
</feature>
<feature type="region of interest" description="Disordered" evidence="3">
    <location>
        <begin position="198"/>
        <end position="293"/>
    </location>
</feature>
<feature type="compositionally biased region" description="Basic and acidic residues" evidence="3">
    <location>
        <begin position="244"/>
        <end position="255"/>
    </location>
</feature>
<feature type="glycosylation site" description="N-linked (GlcNAc...) asparagine" evidence="2">
    <location>
        <position position="501"/>
    </location>
</feature>
<sequence>MLPSFTRKPADHPIGYLVALSGLLMQLMSYGIDNSYSIFSEDMHNDPSLGFPSITAISLGNSVSLGLSPAFGVLAGFCVDRLPPRFMMALSTILLFTGLWISSTLAANIYVVTFTYCLFASIGTACMLSPGAAATSSWFNRYQGLAMGINFAGGGIGSAIIPPLAGKWVVAYGWRKAFQLMSIFCAIGVLATALSARRREPKRDDSSADDETREGNKSGNGSLVRRSNEPATVGGEGAANNGHNEGKEDVREMGRKNGSHTNTSKVPPNGRGVGTNQQNGNDGEGLDVTEQSQRNNTFASAIDVDMDTSMDADEPQVIRSLHTHKLTPWELFLSMFTLPFMGNFLCWFIYSWAFYSLIYAAVPYISSMGKPGTVYAGVPPIPTDVAATLFTFYGVFQVVGSVLVGWLASLVTAEFAYVFCATVGGIGCGLLALGRSYVAFALLLCIIGFCMAGMFAVMPTLIATHLYGPNLGFYFGAVFLAGVVGGFVAPPMQATIQLRNNGSYAFVCVVMSVSMTLSALVCYATLWRSKRSGIVLAARKTKLVEIM</sequence>
<reference evidence="8" key="1">
    <citation type="journal article" date="2005" name="Science">
        <title>The genome of the African trypanosome Trypanosoma brucei.</title>
        <authorList>
            <person name="Berriman M."/>
            <person name="Ghedin E."/>
            <person name="Hertz-Fowler C."/>
            <person name="Blandin G."/>
            <person name="Renauld H."/>
            <person name="Bartholomeu D.C."/>
            <person name="Lennard N.J."/>
            <person name="Caler E."/>
            <person name="Hamlin N.E."/>
            <person name="Haas B."/>
            <person name="Bohme U."/>
            <person name="Hannick L."/>
            <person name="Aslett M.A."/>
            <person name="Shallom J."/>
            <person name="Marcello L."/>
            <person name="Hou L."/>
            <person name="Wickstead B."/>
            <person name="Alsmark U.C.M."/>
            <person name="Arrowsmith C."/>
            <person name="Atkin R.J."/>
            <person name="Barron A.J."/>
            <person name="Bringaud F."/>
            <person name="Brooks K."/>
            <person name="Carrington M."/>
            <person name="Cherevach I."/>
            <person name="Chillingworth T.J."/>
            <person name="Churcher C."/>
            <person name="Clark L.N."/>
            <person name="Corton C.H."/>
            <person name="Cronin A."/>
            <person name="Davies R.M."/>
            <person name="Doggett J."/>
            <person name="Djikeng A."/>
            <person name="Feldblyum T."/>
            <person name="Field M.C."/>
            <person name="Fraser A."/>
            <person name="Goodhead I."/>
            <person name="Hance Z."/>
            <person name="Harper D."/>
            <person name="Harris B.R."/>
            <person name="Hauser H."/>
            <person name="Hostetler J."/>
            <person name="Ivens A."/>
            <person name="Jagels K."/>
            <person name="Johnson D."/>
            <person name="Johnson J."/>
            <person name="Jones K."/>
            <person name="Kerhornou A.X."/>
            <person name="Koo H."/>
            <person name="Larke N."/>
            <person name="Landfear S."/>
            <person name="Larkin C."/>
            <person name="Leech V."/>
            <person name="Line A."/>
            <person name="Lord A."/>
            <person name="Macleod A."/>
            <person name="Mooney P.J."/>
            <person name="Moule S."/>
            <person name="Martin D.M."/>
            <person name="Morgan G.W."/>
            <person name="Mungall K."/>
            <person name="Norbertczak H."/>
            <person name="Ormond D."/>
            <person name="Pai G."/>
            <person name="Peacock C.S."/>
            <person name="Peterson J."/>
            <person name="Quail M.A."/>
            <person name="Rabbinowitsch E."/>
            <person name="Rajandream M.A."/>
            <person name="Reitter C."/>
            <person name="Salzberg S.L."/>
            <person name="Sanders M."/>
            <person name="Schobel S."/>
            <person name="Sharp S."/>
            <person name="Simmonds M."/>
            <person name="Simpson A.J."/>
            <person name="Tallon L."/>
            <person name="Turner C.M."/>
            <person name="Tait A."/>
            <person name="Tivey A.R."/>
            <person name="Van Aken S."/>
            <person name="Walker D."/>
            <person name="Wanless D."/>
            <person name="Wang S."/>
            <person name="White B."/>
            <person name="White O."/>
            <person name="Whitehead S."/>
            <person name="Woodward J."/>
            <person name="Wortman J."/>
            <person name="Adams M.D."/>
            <person name="Embley T.M."/>
            <person name="Gull K."/>
            <person name="Ullu E."/>
            <person name="Barry J.D."/>
            <person name="Fairlamb A.H."/>
            <person name="Opperdoes F."/>
            <person name="Barrell B.G."/>
            <person name="Donelson J.E."/>
            <person name="Hall N."/>
            <person name="Fraser C.M."/>
            <person name="Melville S.E."/>
            <person name="El-Sayed N.M.A."/>
        </authorList>
    </citation>
    <scope>NUCLEOTIDE SEQUENCE [LARGE SCALE GENOMIC DNA]</scope>
    <source>
        <strain evidence="9">927/4 GUTat10.1</strain>
    </source>
</reference>
<reference evidence="6" key="2">
    <citation type="journal article" date="2017" name="PLoS Negl. Trop. Dis.">
        <title>The superfamily keeps growing: Identification in trypanosomatids of RibJ, the first riboflavin transporter family in protists.</title>
        <authorList>
            <person name="Balcazar D.E."/>
            <person name="Vanrell M.C."/>
            <person name="Romano P.S."/>
            <person name="Pereira C.A."/>
            <person name="Goldbaum F.A."/>
            <person name="Bonomi H.R."/>
            <person name="Carrillo C."/>
        </authorList>
    </citation>
    <scope>FUNCTION</scope>
</reference>
<organism evidence="9">
    <name type="scientific">Trypanosoma brucei brucei (strain 927/4 GUTat10.1)</name>
    <dbReference type="NCBI Taxonomy" id="185431"/>
    <lineage>
        <taxon>Eukaryota</taxon>
        <taxon>Discoba</taxon>
        <taxon>Euglenozoa</taxon>
        <taxon>Kinetoplastea</taxon>
        <taxon>Metakinetoplastina</taxon>
        <taxon>Trypanosomatida</taxon>
        <taxon>Trypanosomatidae</taxon>
        <taxon>Trypanosoma</taxon>
    </lineage>
</organism>
<evidence type="ECO:0000255" key="1"/>
<evidence type="ECO:0000255" key="2">
    <source>
        <dbReference type="PROSITE-ProRule" id="PRU00498"/>
    </source>
</evidence>
<evidence type="ECO:0000256" key="3">
    <source>
        <dbReference type="SAM" id="MobiDB-lite"/>
    </source>
</evidence>
<evidence type="ECO:0000269" key="4">
    <source>
    </source>
</evidence>
<evidence type="ECO:0000303" key="5">
    <source>
    </source>
</evidence>
<evidence type="ECO:0000305" key="6"/>
<evidence type="ECO:0000312" key="7">
    <source>
        <dbReference type="EMBL" id="AAX70248.1"/>
    </source>
</evidence>
<evidence type="ECO:0000312" key="8">
    <source>
        <dbReference type="EMBL" id="AAZ11162.1"/>
    </source>
</evidence>
<evidence type="ECO:0000312" key="9">
    <source>
        <dbReference type="Proteomes" id="UP000008524"/>
    </source>
</evidence>
<name>RIBJ_TRYB2</name>
<gene>
    <name evidence="5" type="primary">RibJ</name>
    <name evidence="7" type="ORF">Tb927.5.470</name>
</gene>
<comment type="function">
    <text evidence="4">Transporter involved in riboflavin (vitamin B2) uptake. Also transports FMN and FAD.</text>
</comment>
<comment type="subcellular location">
    <subcellularLocation>
        <location evidence="6">Cell membrane</location>
        <topology evidence="1">Multi-pass membrane protein</topology>
    </subcellularLocation>
</comment>
<comment type="similarity">
    <text evidence="6">Belongs to the major facilitator superfamily. RibJ family.</text>
</comment>
<proteinExistence type="inferred from homology"/>
<accession>Q57VW6</accession>
<accession>D6XFY5</accession>
<protein>
    <recommendedName>
        <fullName evidence="6">Riboflavin transporter RibJ</fullName>
    </recommendedName>
    <alternativeName>
        <fullName evidence="5">Riboflavin/flavin transporter</fullName>
    </alternativeName>
</protein>
<dbReference type="EMBL" id="AC159436">
    <property type="protein sequence ID" value="AAX70248.1"/>
    <property type="molecule type" value="Genomic_DNA"/>
</dbReference>
<dbReference type="EMBL" id="CP000068">
    <property type="protein sequence ID" value="AAZ11162.1"/>
    <property type="molecule type" value="Genomic_DNA"/>
</dbReference>
<dbReference type="RefSeq" id="XP_844721.1">
    <property type="nucleotide sequence ID" value="XM_839628.1"/>
</dbReference>
<dbReference type="STRING" id="185431.Q57VW6"/>
<dbReference type="GlyCosmos" id="Q57VW6">
    <property type="glycosylation" value="1 site, No reported glycans"/>
</dbReference>
<dbReference type="PaxDb" id="5691-AAZ11162"/>
<dbReference type="GeneID" id="3657157"/>
<dbReference type="KEGG" id="tbr:Tb927.5.470"/>
<dbReference type="VEuPathDB" id="TriTrypDB:Tb927.5.470"/>
<dbReference type="eggNOG" id="KOG2504">
    <property type="taxonomic scope" value="Eukaryota"/>
</dbReference>
<dbReference type="InParanoid" id="Q57VW6"/>
<dbReference type="OMA" id="CVFISCC"/>
<dbReference type="OrthoDB" id="2213137at2759"/>
<dbReference type="Proteomes" id="UP000008524">
    <property type="component" value="Chromosome 5"/>
</dbReference>
<dbReference type="GO" id="GO:0005886">
    <property type="term" value="C:plasma membrane"/>
    <property type="evidence" value="ECO:0007669"/>
    <property type="project" value="UniProtKB-SubCell"/>
</dbReference>
<dbReference type="GO" id="GO:0032217">
    <property type="term" value="F:riboflavin transmembrane transporter activity"/>
    <property type="evidence" value="ECO:0000314"/>
    <property type="project" value="UniProtKB"/>
</dbReference>
<dbReference type="GO" id="GO:0010608">
    <property type="term" value="P:post-transcriptional regulation of gene expression"/>
    <property type="evidence" value="ECO:0000314"/>
    <property type="project" value="GeneDB"/>
</dbReference>
<dbReference type="GO" id="GO:0032218">
    <property type="term" value="P:riboflavin transport"/>
    <property type="evidence" value="ECO:0000314"/>
    <property type="project" value="UniProtKB"/>
</dbReference>
<dbReference type="FunFam" id="1.20.1250.20:FF:001027">
    <property type="entry name" value="Riboflavin transporter RibJ"/>
    <property type="match status" value="1"/>
</dbReference>
<dbReference type="Gene3D" id="1.20.1250.20">
    <property type="entry name" value="MFS general substrate transporter like domains"/>
    <property type="match status" value="2"/>
</dbReference>
<dbReference type="InterPro" id="IPR011701">
    <property type="entry name" value="MFS"/>
</dbReference>
<dbReference type="InterPro" id="IPR052983">
    <property type="entry name" value="MFS_Riboflavin_Transporter"/>
</dbReference>
<dbReference type="InterPro" id="IPR036259">
    <property type="entry name" value="MFS_trans_sf"/>
</dbReference>
<dbReference type="PANTHER" id="PTHR43385">
    <property type="entry name" value="RIBOFLAVIN TRANSPORTER RIBJ"/>
    <property type="match status" value="1"/>
</dbReference>
<dbReference type="PANTHER" id="PTHR43385:SF1">
    <property type="entry name" value="RIBOFLAVIN TRANSPORTER RIBJ"/>
    <property type="match status" value="1"/>
</dbReference>
<dbReference type="Pfam" id="PF07690">
    <property type="entry name" value="MFS_1"/>
    <property type="match status" value="1"/>
</dbReference>
<dbReference type="SUPFAM" id="SSF103473">
    <property type="entry name" value="MFS general substrate transporter"/>
    <property type="match status" value="1"/>
</dbReference>
<keyword id="KW-1003">Cell membrane</keyword>
<keyword id="KW-0325">Glycoprotein</keyword>
<keyword id="KW-0472">Membrane</keyword>
<keyword id="KW-1185">Reference proteome</keyword>
<keyword id="KW-0812">Transmembrane</keyword>
<keyword id="KW-1133">Transmembrane helix</keyword>
<keyword id="KW-0813">Transport</keyword>